<comment type="function">
    <text evidence="1">Responsible for the transport of dicarboxylates such as succinate, fumarate, and malate from the periplasm across the membrane.</text>
</comment>
<comment type="subcellular location">
    <subcellularLocation>
        <location evidence="1">Cell inner membrane</location>
        <topology evidence="1">Multi-pass membrane protein</topology>
    </subcellularLocation>
</comment>
<comment type="similarity">
    <text evidence="1">Belongs to the dicarboxylate/amino acid:cation symporter (DAACS) (TC 2.A.23) family.</text>
</comment>
<keyword id="KW-0997">Cell inner membrane</keyword>
<keyword id="KW-1003">Cell membrane</keyword>
<keyword id="KW-0472">Membrane</keyword>
<keyword id="KW-0769">Symport</keyword>
<keyword id="KW-0812">Transmembrane</keyword>
<keyword id="KW-1133">Transmembrane helix</keyword>
<keyword id="KW-0813">Transport</keyword>
<gene>
    <name evidence="1" type="primary">dctA</name>
    <name type="ordered locus">A2cp1_1856</name>
</gene>
<accession>B8J708</accession>
<name>DCTA_ANAD2</name>
<dbReference type="EMBL" id="CP001359">
    <property type="protein sequence ID" value="ACL65198.1"/>
    <property type="molecule type" value="Genomic_DNA"/>
</dbReference>
<dbReference type="RefSeq" id="WP_012633118.1">
    <property type="nucleotide sequence ID" value="NC_011891.1"/>
</dbReference>
<dbReference type="SMR" id="B8J708"/>
<dbReference type="KEGG" id="acp:A2cp1_1856"/>
<dbReference type="HOGENOM" id="CLU_019375_7_0_7"/>
<dbReference type="Proteomes" id="UP000007089">
    <property type="component" value="Chromosome"/>
</dbReference>
<dbReference type="GO" id="GO:0005886">
    <property type="term" value="C:plasma membrane"/>
    <property type="evidence" value="ECO:0007669"/>
    <property type="project" value="UniProtKB-SubCell"/>
</dbReference>
<dbReference type="GO" id="GO:0015138">
    <property type="term" value="F:fumarate transmembrane transporter activity"/>
    <property type="evidence" value="ECO:0007669"/>
    <property type="project" value="TreeGrafter"/>
</dbReference>
<dbReference type="GO" id="GO:0015366">
    <property type="term" value="F:malate:proton symporter activity"/>
    <property type="evidence" value="ECO:0007669"/>
    <property type="project" value="TreeGrafter"/>
</dbReference>
<dbReference type="GO" id="GO:0015141">
    <property type="term" value="F:succinate transmembrane transporter activity"/>
    <property type="evidence" value="ECO:0007669"/>
    <property type="project" value="TreeGrafter"/>
</dbReference>
<dbReference type="GO" id="GO:0070778">
    <property type="term" value="P:L-aspartate transmembrane transport"/>
    <property type="evidence" value="ECO:0007669"/>
    <property type="project" value="TreeGrafter"/>
</dbReference>
<dbReference type="FunFam" id="1.10.3860.10:FF:000001">
    <property type="entry name" value="C4-dicarboxylate transport protein"/>
    <property type="match status" value="1"/>
</dbReference>
<dbReference type="Gene3D" id="1.10.3860.10">
    <property type="entry name" value="Sodium:dicarboxylate symporter"/>
    <property type="match status" value="1"/>
</dbReference>
<dbReference type="HAMAP" id="MF_01300">
    <property type="entry name" value="C4_dicarb_transport"/>
    <property type="match status" value="1"/>
</dbReference>
<dbReference type="InterPro" id="IPR023954">
    <property type="entry name" value="C4_dicarb_transport"/>
</dbReference>
<dbReference type="InterPro" id="IPR001991">
    <property type="entry name" value="Na-dicarboxylate_symporter"/>
</dbReference>
<dbReference type="InterPro" id="IPR018107">
    <property type="entry name" value="Na-dicarboxylate_symporter_CS"/>
</dbReference>
<dbReference type="InterPro" id="IPR036458">
    <property type="entry name" value="Na:dicarbo_symporter_sf"/>
</dbReference>
<dbReference type="NCBIfam" id="NF002461">
    <property type="entry name" value="PRK01663.1"/>
    <property type="match status" value="1"/>
</dbReference>
<dbReference type="NCBIfam" id="NF009587">
    <property type="entry name" value="PRK13027.1"/>
    <property type="match status" value="1"/>
</dbReference>
<dbReference type="PANTHER" id="PTHR42865:SF1">
    <property type="entry name" value="AEROBIC C4-DICARBOXYLATE TRANSPORT PROTEIN"/>
    <property type="match status" value="1"/>
</dbReference>
<dbReference type="PANTHER" id="PTHR42865">
    <property type="entry name" value="PROTON/GLUTAMATE-ASPARTATE SYMPORTER"/>
    <property type="match status" value="1"/>
</dbReference>
<dbReference type="Pfam" id="PF00375">
    <property type="entry name" value="SDF"/>
    <property type="match status" value="1"/>
</dbReference>
<dbReference type="PRINTS" id="PR00173">
    <property type="entry name" value="EDTRNSPORT"/>
</dbReference>
<dbReference type="SUPFAM" id="SSF118215">
    <property type="entry name" value="Proton glutamate symport protein"/>
    <property type="match status" value="1"/>
</dbReference>
<dbReference type="PROSITE" id="PS00713">
    <property type="entry name" value="NA_DICARBOXYL_SYMP_1"/>
    <property type="match status" value="1"/>
</dbReference>
<dbReference type="PROSITE" id="PS00714">
    <property type="entry name" value="NA_DICARBOXYL_SYMP_2"/>
    <property type="match status" value="1"/>
</dbReference>
<evidence type="ECO:0000255" key="1">
    <source>
        <dbReference type="HAMAP-Rule" id="MF_01300"/>
    </source>
</evidence>
<evidence type="ECO:0000256" key="2">
    <source>
        <dbReference type="SAM" id="MobiDB-lite"/>
    </source>
</evidence>
<feature type="chain" id="PRO_1000165283" description="C4-dicarboxylate transport protein">
    <location>
        <begin position="1"/>
        <end position="440"/>
    </location>
</feature>
<feature type="transmembrane region" description="Helical" evidence="1">
    <location>
        <begin position="8"/>
        <end position="28"/>
    </location>
</feature>
<feature type="transmembrane region" description="Helical" evidence="1">
    <location>
        <begin position="40"/>
        <end position="60"/>
    </location>
</feature>
<feature type="transmembrane region" description="Helical" evidence="1">
    <location>
        <begin position="74"/>
        <end position="94"/>
    </location>
</feature>
<feature type="transmembrane region" description="Helical" evidence="1">
    <location>
        <begin position="147"/>
        <end position="167"/>
    </location>
</feature>
<feature type="transmembrane region" description="Helical" evidence="1">
    <location>
        <begin position="187"/>
        <end position="207"/>
    </location>
</feature>
<feature type="transmembrane region" description="Helical" evidence="1">
    <location>
        <begin position="221"/>
        <end position="241"/>
    </location>
</feature>
<feature type="transmembrane region" description="Helical" evidence="1">
    <location>
        <begin position="288"/>
        <end position="308"/>
    </location>
</feature>
<feature type="transmembrane region" description="Helical" evidence="1">
    <location>
        <begin position="354"/>
        <end position="374"/>
    </location>
</feature>
<feature type="region of interest" description="Disordered" evidence="2">
    <location>
        <begin position="419"/>
        <end position="440"/>
    </location>
</feature>
<organism>
    <name type="scientific">Anaeromyxobacter dehalogenans (strain 2CP-1 / ATCC BAA-258)</name>
    <dbReference type="NCBI Taxonomy" id="455488"/>
    <lineage>
        <taxon>Bacteria</taxon>
        <taxon>Pseudomonadati</taxon>
        <taxon>Myxococcota</taxon>
        <taxon>Myxococcia</taxon>
        <taxon>Myxococcales</taxon>
        <taxon>Cystobacterineae</taxon>
        <taxon>Anaeromyxobacteraceae</taxon>
        <taxon>Anaeromyxobacter</taxon>
    </lineage>
</organism>
<proteinExistence type="inferred from homology"/>
<sequence>MKRLARSLYLQVLLAVVLGALVGHLFPATGASLKPLGDGFIKLVKMLIAPIVFATVVTGIAKMGDLRKVGRVGLKGLLYFEVLTTVALAIGLVVARLARPGAGMNVDPATLDTKAIASYTNGAQAHGTVDFLMNVIPRDVADAFARGDILQVLLFSVLFGAALAALKDKGRPVLEFVDGLSLVLFRIVGFVMRLAPVGAFGAMAFTVGKYGIATLLSLGKLIACFYATSALFVVLMLGLVLRWCGLSLFRFLRYIKEEIFVVLGTSSSESALPLMMRKMEKLGCSKPVVGLVVPMGYSFNLDGTSIYLTLATLFIAQATNTHVTLVQELEILAVLLLTSKGAAAVTGGGFITLAATLSAVGNIPVAGLALLLGVDRFMSEARAITNLIGNGVASVAVSRWEGELDQARARAVLAGTVPEEVEPANEPEPPAVPAGAGLHG</sequence>
<reference key="1">
    <citation type="submission" date="2009-01" db="EMBL/GenBank/DDBJ databases">
        <title>Complete sequence of Anaeromyxobacter dehalogenans 2CP-1.</title>
        <authorList>
            <person name="Lucas S."/>
            <person name="Copeland A."/>
            <person name="Lapidus A."/>
            <person name="Glavina del Rio T."/>
            <person name="Dalin E."/>
            <person name="Tice H."/>
            <person name="Bruce D."/>
            <person name="Goodwin L."/>
            <person name="Pitluck S."/>
            <person name="Saunders E."/>
            <person name="Brettin T."/>
            <person name="Detter J.C."/>
            <person name="Han C."/>
            <person name="Larimer F."/>
            <person name="Land M."/>
            <person name="Hauser L."/>
            <person name="Kyrpides N."/>
            <person name="Ovchinnikova G."/>
            <person name="Beliaev A.S."/>
            <person name="Richardson P."/>
        </authorList>
    </citation>
    <scope>NUCLEOTIDE SEQUENCE [LARGE SCALE GENOMIC DNA]</scope>
    <source>
        <strain>2CP-1 / ATCC BAA-258</strain>
    </source>
</reference>
<protein>
    <recommendedName>
        <fullName evidence="1">C4-dicarboxylate transport protein</fullName>
    </recommendedName>
</protein>